<feature type="chain" id="PRO_0000256551" description="Trigger factor">
    <location>
        <begin position="1"/>
        <end position="447"/>
    </location>
</feature>
<feature type="domain" description="PPIase FKBP-type" evidence="1">
    <location>
        <begin position="159"/>
        <end position="244"/>
    </location>
</feature>
<reference key="1">
    <citation type="journal article" date="2005" name="Nat. Biotechnol.">
        <title>Genome sequence of the chlorinated compound-respiring bacterium Dehalococcoides species strain CBDB1.</title>
        <authorList>
            <person name="Kube M."/>
            <person name="Beck A."/>
            <person name="Zinder S.H."/>
            <person name="Kuhl H."/>
            <person name="Reinhardt R."/>
            <person name="Adrian L."/>
        </authorList>
    </citation>
    <scope>NUCLEOTIDE SEQUENCE [LARGE SCALE GENOMIC DNA]</scope>
    <source>
        <strain>CBDB1</strain>
    </source>
</reference>
<name>TIG_DEHMC</name>
<gene>
    <name evidence="1" type="primary">tig</name>
    <name type="ordered locus">cbdbA664</name>
</gene>
<keyword id="KW-0131">Cell cycle</keyword>
<keyword id="KW-0132">Cell division</keyword>
<keyword id="KW-0143">Chaperone</keyword>
<keyword id="KW-0963">Cytoplasm</keyword>
<keyword id="KW-0413">Isomerase</keyword>
<keyword id="KW-0697">Rotamase</keyword>
<dbReference type="EC" id="5.2.1.8" evidence="1"/>
<dbReference type="EMBL" id="AJ965256">
    <property type="protein sequence ID" value="CAI82831.1"/>
    <property type="molecule type" value="Genomic_DNA"/>
</dbReference>
<dbReference type="RefSeq" id="WP_011309182.1">
    <property type="nucleotide sequence ID" value="NC_007356.1"/>
</dbReference>
<dbReference type="SMR" id="Q3ZX83"/>
<dbReference type="KEGG" id="deh:cbdbA664"/>
<dbReference type="HOGENOM" id="CLU_033058_3_2_0"/>
<dbReference type="Proteomes" id="UP000000433">
    <property type="component" value="Chromosome"/>
</dbReference>
<dbReference type="GO" id="GO:0005737">
    <property type="term" value="C:cytoplasm"/>
    <property type="evidence" value="ECO:0007669"/>
    <property type="project" value="UniProtKB-SubCell"/>
</dbReference>
<dbReference type="GO" id="GO:0003755">
    <property type="term" value="F:peptidyl-prolyl cis-trans isomerase activity"/>
    <property type="evidence" value="ECO:0007669"/>
    <property type="project" value="UniProtKB-UniRule"/>
</dbReference>
<dbReference type="GO" id="GO:0044183">
    <property type="term" value="F:protein folding chaperone"/>
    <property type="evidence" value="ECO:0007669"/>
    <property type="project" value="TreeGrafter"/>
</dbReference>
<dbReference type="GO" id="GO:0043022">
    <property type="term" value="F:ribosome binding"/>
    <property type="evidence" value="ECO:0007669"/>
    <property type="project" value="TreeGrafter"/>
</dbReference>
<dbReference type="GO" id="GO:0051083">
    <property type="term" value="P:'de novo' cotranslational protein folding"/>
    <property type="evidence" value="ECO:0007669"/>
    <property type="project" value="TreeGrafter"/>
</dbReference>
<dbReference type="GO" id="GO:0051301">
    <property type="term" value="P:cell division"/>
    <property type="evidence" value="ECO:0007669"/>
    <property type="project" value="UniProtKB-KW"/>
</dbReference>
<dbReference type="GO" id="GO:0061077">
    <property type="term" value="P:chaperone-mediated protein folding"/>
    <property type="evidence" value="ECO:0007669"/>
    <property type="project" value="TreeGrafter"/>
</dbReference>
<dbReference type="GO" id="GO:0015031">
    <property type="term" value="P:protein transport"/>
    <property type="evidence" value="ECO:0007669"/>
    <property type="project" value="UniProtKB-UniRule"/>
</dbReference>
<dbReference type="GO" id="GO:0043335">
    <property type="term" value="P:protein unfolding"/>
    <property type="evidence" value="ECO:0007669"/>
    <property type="project" value="TreeGrafter"/>
</dbReference>
<dbReference type="Gene3D" id="3.10.50.40">
    <property type="match status" value="1"/>
</dbReference>
<dbReference type="Gene3D" id="3.30.70.1050">
    <property type="entry name" value="Trigger factor ribosome-binding domain"/>
    <property type="match status" value="1"/>
</dbReference>
<dbReference type="Gene3D" id="1.10.3120.10">
    <property type="entry name" value="Trigger factor, C-terminal domain"/>
    <property type="match status" value="1"/>
</dbReference>
<dbReference type="HAMAP" id="MF_00303">
    <property type="entry name" value="Trigger_factor_Tig"/>
    <property type="match status" value="1"/>
</dbReference>
<dbReference type="InterPro" id="IPR046357">
    <property type="entry name" value="PPIase_dom_sf"/>
</dbReference>
<dbReference type="InterPro" id="IPR005215">
    <property type="entry name" value="Trig_fac"/>
</dbReference>
<dbReference type="InterPro" id="IPR008880">
    <property type="entry name" value="Trigger_fac_C"/>
</dbReference>
<dbReference type="InterPro" id="IPR037041">
    <property type="entry name" value="Trigger_fac_C_sf"/>
</dbReference>
<dbReference type="InterPro" id="IPR008881">
    <property type="entry name" value="Trigger_fac_ribosome-bd_bac"/>
</dbReference>
<dbReference type="InterPro" id="IPR036611">
    <property type="entry name" value="Trigger_fac_ribosome-bd_sf"/>
</dbReference>
<dbReference type="InterPro" id="IPR027304">
    <property type="entry name" value="Trigger_fact/SurA_dom_sf"/>
</dbReference>
<dbReference type="NCBIfam" id="TIGR00115">
    <property type="entry name" value="tig"/>
    <property type="match status" value="1"/>
</dbReference>
<dbReference type="PANTHER" id="PTHR30560">
    <property type="entry name" value="TRIGGER FACTOR CHAPERONE AND PEPTIDYL-PROLYL CIS/TRANS ISOMERASE"/>
    <property type="match status" value="1"/>
</dbReference>
<dbReference type="PANTHER" id="PTHR30560:SF3">
    <property type="entry name" value="TRIGGER FACTOR-LIKE PROTEIN TIG, CHLOROPLASTIC"/>
    <property type="match status" value="1"/>
</dbReference>
<dbReference type="Pfam" id="PF05698">
    <property type="entry name" value="Trigger_C"/>
    <property type="match status" value="1"/>
</dbReference>
<dbReference type="Pfam" id="PF05697">
    <property type="entry name" value="Trigger_N"/>
    <property type="match status" value="1"/>
</dbReference>
<dbReference type="PIRSF" id="PIRSF003095">
    <property type="entry name" value="Trigger_factor"/>
    <property type="match status" value="1"/>
</dbReference>
<dbReference type="SUPFAM" id="SSF54534">
    <property type="entry name" value="FKBP-like"/>
    <property type="match status" value="1"/>
</dbReference>
<dbReference type="SUPFAM" id="SSF109998">
    <property type="entry name" value="Triger factor/SurA peptide-binding domain-like"/>
    <property type="match status" value="1"/>
</dbReference>
<dbReference type="SUPFAM" id="SSF102735">
    <property type="entry name" value="Trigger factor ribosome-binding domain"/>
    <property type="match status" value="1"/>
</dbReference>
<evidence type="ECO:0000255" key="1">
    <source>
        <dbReference type="HAMAP-Rule" id="MF_00303"/>
    </source>
</evidence>
<proteinExistence type="inferred from homology"/>
<protein>
    <recommendedName>
        <fullName evidence="1">Trigger factor</fullName>
        <shortName evidence="1">TF</shortName>
        <ecNumber evidence="1">5.2.1.8</ecNumber>
    </recommendedName>
    <alternativeName>
        <fullName evidence="1">PPIase</fullName>
    </alternativeName>
</protein>
<sequence length="447" mass="50989">MKVTDKKIEGCQASITVEMDSTEVEEGLSKTYRRLVKKVEIPGFRKGKAPRDVFEKYVSREKMLDELVDDIVPEACQKAIQDEEIKPFATPKVAMVTTDPFVFSARIPLPPVVELGDYKTIRATKETVEIAEENIDTVVDQVLHQRATWETAERPVKMGDMLLMQVESTLNGEPYLNREDMQYSVREEAIYPAPGFGDCLVDMVAGEPKEFSIVFPEDHARAELAGKTAAFKVTVREIKEEKLPELNDAFAHELNPEFNTLSELRQRIRENMQDRQDDKAQAKFEDQIVEALIKMSKIDYPEVMVEAELDQIIEQQLQRLQSNVKSPEEFRAMLSQMTPEDMQQRYRPLAEQRVASSLVLGKLATTENLVPNDEEVDAEIEKLITDAGDKKEEEKALYNQSETRDRLIQLLTARKTMAFIDEIALQPALEAVEPKADEDEKTEEADK</sequence>
<comment type="function">
    <text evidence="1">Involved in protein export. Acts as a chaperone by maintaining the newly synthesized protein in an open conformation. Functions as a peptidyl-prolyl cis-trans isomerase.</text>
</comment>
<comment type="catalytic activity">
    <reaction evidence="1">
        <text>[protein]-peptidylproline (omega=180) = [protein]-peptidylproline (omega=0)</text>
        <dbReference type="Rhea" id="RHEA:16237"/>
        <dbReference type="Rhea" id="RHEA-COMP:10747"/>
        <dbReference type="Rhea" id="RHEA-COMP:10748"/>
        <dbReference type="ChEBI" id="CHEBI:83833"/>
        <dbReference type="ChEBI" id="CHEBI:83834"/>
        <dbReference type="EC" id="5.2.1.8"/>
    </reaction>
</comment>
<comment type="subcellular location">
    <subcellularLocation>
        <location>Cytoplasm</location>
    </subcellularLocation>
    <text evidence="1">About half TF is bound to the ribosome near the polypeptide exit tunnel while the other half is free in the cytoplasm.</text>
</comment>
<comment type="domain">
    <text evidence="1">Consists of 3 domains; the N-terminus binds the ribosome, the middle domain has PPIase activity, while the C-terminus has intrinsic chaperone activity on its own.</text>
</comment>
<comment type="similarity">
    <text evidence="1">Belongs to the FKBP-type PPIase family. Tig subfamily.</text>
</comment>
<accession>Q3ZX83</accession>
<organism>
    <name type="scientific">Dehalococcoides mccartyi (strain CBDB1)</name>
    <dbReference type="NCBI Taxonomy" id="255470"/>
    <lineage>
        <taxon>Bacteria</taxon>
        <taxon>Bacillati</taxon>
        <taxon>Chloroflexota</taxon>
        <taxon>Dehalococcoidia</taxon>
        <taxon>Dehalococcoidales</taxon>
        <taxon>Dehalococcoidaceae</taxon>
        <taxon>Dehalococcoides</taxon>
    </lineage>
</organism>